<sequence length="486" mass="52840">MTKITRVGSASPPDGGWGWMIVAGCFLVTICTRAVTRCISIFFVEFQTYFAQDYSQTAWIHSIVDCMTMLCAPLGSVVSNQLSCQAGIMLGGLLASTGLILGSFATSLKHLYLSLGVLTGLGFALCYSPAIAMVGKYFSRRKAFAYGIAMSGSGIGTFILAPVVQLLIEQFSWRGALLILGGFVLNLCVCGALMRPITLKEDPSGPEKSHDRDAQREDCKQASPYSPLTKEWTETRLCCSLQQGYGFLLMSDFVVLAVSVLFMAYGCSPLFVYLVPYALSVGVSHHQAAFLMSILGVIDIVGNITFGWLTDRRCLKNYRYVCYLFAVALDGLCYLCLPMLQSFPLLVPFSCTFGYFDGAYVTLIPVVTAEIVGTTSLSSALGVVYFLHAVPYLVSPPIAGWLVDTTGSYTAAFLLCGFAMIFSSILLGFAKIAKRMKRTQVPFLVKDSDPKLHLWTNGSVAYSIAKELDQKDEESLAKARTGCNLT</sequence>
<evidence type="ECO:0000250" key="1">
    <source>
        <dbReference type="UniProtKB" id="Q6ZSM3"/>
    </source>
</evidence>
<evidence type="ECO:0000255" key="2"/>
<evidence type="ECO:0000256" key="3">
    <source>
        <dbReference type="SAM" id="MobiDB-lite"/>
    </source>
</evidence>
<evidence type="ECO:0000269" key="4">
    <source>
    </source>
</evidence>
<evidence type="ECO:0000269" key="5">
    <source>
    </source>
</evidence>
<evidence type="ECO:0000269" key="6">
    <source>
    </source>
</evidence>
<evidence type="ECO:0000303" key="7">
    <source>
    </source>
</evidence>
<evidence type="ECO:0000305" key="8"/>
<evidence type="ECO:0000312" key="9">
    <source>
        <dbReference type="RGD" id="1311468"/>
    </source>
</evidence>
<proteinExistence type="evidence at protein level"/>
<organism>
    <name type="scientific">Rattus norvegicus</name>
    <name type="common">Rat</name>
    <dbReference type="NCBI Taxonomy" id="10116"/>
    <lineage>
        <taxon>Eukaryota</taxon>
        <taxon>Metazoa</taxon>
        <taxon>Chordata</taxon>
        <taxon>Craniata</taxon>
        <taxon>Vertebrata</taxon>
        <taxon>Euteleostomi</taxon>
        <taxon>Mammalia</taxon>
        <taxon>Eutheria</taxon>
        <taxon>Euarchontoglires</taxon>
        <taxon>Glires</taxon>
        <taxon>Rodentia</taxon>
        <taxon>Myomorpha</taxon>
        <taxon>Muroidea</taxon>
        <taxon>Muridae</taxon>
        <taxon>Murinae</taxon>
        <taxon>Rattus</taxon>
    </lineage>
</organism>
<keyword id="KW-1003">Cell membrane</keyword>
<keyword id="KW-0472">Membrane</keyword>
<keyword id="KW-1185">Reference proteome</keyword>
<keyword id="KW-0812">Transmembrane</keyword>
<keyword id="KW-1133">Transmembrane helix</keyword>
<dbReference type="EMBL" id="AC098155">
    <property type="status" value="NOT_ANNOTATED_CDS"/>
    <property type="molecule type" value="Genomic_DNA"/>
</dbReference>
<dbReference type="RefSeq" id="NP_001178566.1">
    <property type="nucleotide sequence ID" value="NM_001191637.1"/>
</dbReference>
<dbReference type="RefSeq" id="XP_017444788.1">
    <property type="nucleotide sequence ID" value="XM_017589299.1"/>
</dbReference>
<dbReference type="RefSeq" id="XP_017444789.1">
    <property type="nucleotide sequence ID" value="XM_017589300.3"/>
</dbReference>
<dbReference type="RefSeq" id="XP_017444790.1">
    <property type="nucleotide sequence ID" value="XM_017589301.3"/>
</dbReference>
<dbReference type="RefSeq" id="XP_017444791.1">
    <property type="nucleotide sequence ID" value="XM_017589302.1"/>
</dbReference>
<dbReference type="RefSeq" id="XP_017444792.1">
    <property type="nucleotide sequence ID" value="XM_017589303.1"/>
</dbReference>
<dbReference type="SMR" id="D4A734"/>
<dbReference type="FunCoup" id="D4A734">
    <property type="interactions" value="43"/>
</dbReference>
<dbReference type="STRING" id="10116.ENSRNOP00000038838"/>
<dbReference type="PhosphoSitePlus" id="D4A734"/>
<dbReference type="PaxDb" id="10116-ENSRNOP00000038838"/>
<dbReference type="PeptideAtlas" id="D4A734"/>
<dbReference type="Ensembl" id="ENSRNOT00000030024.6">
    <property type="protein sequence ID" value="ENSRNOP00000038838.3"/>
    <property type="gene ID" value="ENSRNOG00000021916.6"/>
</dbReference>
<dbReference type="GeneID" id="309525"/>
<dbReference type="KEGG" id="rno:309525"/>
<dbReference type="UCSC" id="RGD:1311468">
    <property type="organism name" value="rat"/>
</dbReference>
<dbReference type="AGR" id="RGD:1311468"/>
<dbReference type="CTD" id="387700"/>
<dbReference type="RGD" id="1311468">
    <property type="gene designation" value="Slc16a12"/>
</dbReference>
<dbReference type="eggNOG" id="KOG2504">
    <property type="taxonomic scope" value="Eukaryota"/>
</dbReference>
<dbReference type="GeneTree" id="ENSGT00940000156169"/>
<dbReference type="HOGENOM" id="CLU_001265_59_1_1"/>
<dbReference type="InParanoid" id="D4A734"/>
<dbReference type="OMA" id="WVLASHQ"/>
<dbReference type="OrthoDB" id="47715at9989"/>
<dbReference type="PhylomeDB" id="D4A734"/>
<dbReference type="TreeFam" id="TF313792"/>
<dbReference type="PRO" id="PR:D4A734"/>
<dbReference type="Proteomes" id="UP000002494">
    <property type="component" value="Chromosome 1"/>
</dbReference>
<dbReference type="Bgee" id="ENSRNOG00000021916">
    <property type="expression patterns" value="Expressed in adult mammalian kidney and 17 other cell types or tissues"/>
</dbReference>
<dbReference type="GO" id="GO:0016323">
    <property type="term" value="C:basolateral plasma membrane"/>
    <property type="evidence" value="ECO:0000314"/>
    <property type="project" value="UniProtKB"/>
</dbReference>
<dbReference type="GO" id="GO:0005886">
    <property type="term" value="C:plasma membrane"/>
    <property type="evidence" value="ECO:0000266"/>
    <property type="project" value="RGD"/>
</dbReference>
<dbReference type="GO" id="GO:0005308">
    <property type="term" value="F:creatine transmembrane transporter activity"/>
    <property type="evidence" value="ECO:0000314"/>
    <property type="project" value="UniProtKB"/>
</dbReference>
<dbReference type="GO" id="GO:0022857">
    <property type="term" value="F:transmembrane transporter activity"/>
    <property type="evidence" value="ECO:0000318"/>
    <property type="project" value="GO_Central"/>
</dbReference>
<dbReference type="GO" id="GO:0015292">
    <property type="term" value="F:uniporter activity"/>
    <property type="evidence" value="ECO:0000250"/>
    <property type="project" value="UniProtKB"/>
</dbReference>
<dbReference type="GO" id="GO:0015881">
    <property type="term" value="P:creatine transmembrane transport"/>
    <property type="evidence" value="ECO:0000314"/>
    <property type="project" value="UniProtKB"/>
</dbReference>
<dbReference type="GO" id="GO:0046449">
    <property type="term" value="P:creatinine metabolic process"/>
    <property type="evidence" value="ECO:0000314"/>
    <property type="project" value="UniProtKB"/>
</dbReference>
<dbReference type="CDD" id="cd17424">
    <property type="entry name" value="MFS_MCT12"/>
    <property type="match status" value="1"/>
</dbReference>
<dbReference type="FunFam" id="1.20.1250.20:FF:000128">
    <property type="entry name" value="monocarboxylate transporter 12 isoform X1"/>
    <property type="match status" value="1"/>
</dbReference>
<dbReference type="FunFam" id="1.20.1250.20:FF:000160">
    <property type="entry name" value="monocarboxylate transporter 12 isoform X1"/>
    <property type="match status" value="1"/>
</dbReference>
<dbReference type="Gene3D" id="1.20.1250.20">
    <property type="entry name" value="MFS general substrate transporter like domains"/>
    <property type="match status" value="2"/>
</dbReference>
<dbReference type="InterPro" id="IPR011701">
    <property type="entry name" value="MFS"/>
</dbReference>
<dbReference type="InterPro" id="IPR020846">
    <property type="entry name" value="MFS_dom"/>
</dbReference>
<dbReference type="InterPro" id="IPR036259">
    <property type="entry name" value="MFS_trans_sf"/>
</dbReference>
<dbReference type="InterPro" id="IPR050327">
    <property type="entry name" value="Proton-linked_MCT"/>
</dbReference>
<dbReference type="PANTHER" id="PTHR11360">
    <property type="entry name" value="MONOCARBOXYLATE TRANSPORTER"/>
    <property type="match status" value="1"/>
</dbReference>
<dbReference type="PANTHER" id="PTHR11360:SF318">
    <property type="entry name" value="MONOCARBOXYLATE TRANSPORTER 12"/>
    <property type="match status" value="1"/>
</dbReference>
<dbReference type="Pfam" id="PF07690">
    <property type="entry name" value="MFS_1"/>
    <property type="match status" value="1"/>
</dbReference>
<dbReference type="SUPFAM" id="SSF103473">
    <property type="entry name" value="MFS general substrate transporter"/>
    <property type="match status" value="1"/>
</dbReference>
<dbReference type="PROSITE" id="PS50850">
    <property type="entry name" value="MFS"/>
    <property type="match status" value="1"/>
</dbReference>
<feature type="chain" id="PRO_0000445618" description="Monocarboxylate transporter 12">
    <location>
        <begin position="1"/>
        <end position="486"/>
    </location>
</feature>
<feature type="topological domain" description="Cytoplasmic" evidence="2">
    <location>
        <begin position="1"/>
        <end position="9"/>
    </location>
</feature>
<feature type="transmembrane region" description="Helical" evidence="2">
    <location>
        <begin position="10"/>
        <end position="30"/>
    </location>
</feature>
<feature type="transmembrane region" description="Helical" evidence="2">
    <location>
        <begin position="58"/>
        <end position="78"/>
    </location>
</feature>
<feature type="transmembrane region" description="Helical" evidence="2">
    <location>
        <begin position="86"/>
        <end position="106"/>
    </location>
</feature>
<feature type="transmembrane region" description="Helical" evidence="2">
    <location>
        <begin position="115"/>
        <end position="135"/>
    </location>
</feature>
<feature type="transmembrane region" description="Helical" evidence="2">
    <location>
        <begin position="148"/>
        <end position="168"/>
    </location>
</feature>
<feature type="transmembrane region" description="Helical" evidence="2">
    <location>
        <begin position="177"/>
        <end position="197"/>
    </location>
</feature>
<feature type="transmembrane region" description="Helical" evidence="2">
    <location>
        <begin position="253"/>
        <end position="273"/>
    </location>
</feature>
<feature type="transmembrane region" description="Helical" evidence="2">
    <location>
        <begin position="289"/>
        <end position="309"/>
    </location>
</feature>
<feature type="transmembrane region" description="Helical" evidence="2">
    <location>
        <begin position="320"/>
        <end position="340"/>
    </location>
</feature>
<feature type="transmembrane region" description="Helical" evidence="2">
    <location>
        <begin position="353"/>
        <end position="373"/>
    </location>
</feature>
<feature type="transmembrane region" description="Helical" evidence="2">
    <location>
        <begin position="383"/>
        <end position="403"/>
    </location>
</feature>
<feature type="transmembrane region" description="Helical" evidence="2">
    <location>
        <begin position="410"/>
        <end position="430"/>
    </location>
</feature>
<feature type="topological domain" description="Cytoplasmic" evidence="2">
    <location>
        <begin position="431"/>
        <end position="486"/>
    </location>
</feature>
<feature type="region of interest" description="Disordered" evidence="3">
    <location>
        <begin position="201"/>
        <end position="221"/>
    </location>
</feature>
<feature type="compositionally biased region" description="Basic and acidic residues" evidence="3">
    <location>
        <begin position="201"/>
        <end position="220"/>
    </location>
</feature>
<comment type="function">
    <text evidence="5 6">Functions as a transporter for creatine and as well for its precursor guanidinoacetate. Transport of creatine and GAA is independent of resting membrane potential and extracellular Na(+), Cl(-), or pH. Contributes to the process of creatine biosynthesis and distribution.</text>
</comment>
<comment type="catalytic activity">
    <reaction evidence="5 6">
        <text>creatine(in) = creatine(out)</text>
        <dbReference type="Rhea" id="RHEA:73043"/>
        <dbReference type="ChEBI" id="CHEBI:57947"/>
    </reaction>
</comment>
<comment type="catalytic activity">
    <reaction evidence="5">
        <text>guanidinoacetate(in) = guanidinoacetate(out)</text>
        <dbReference type="Rhea" id="RHEA:73047"/>
        <dbReference type="ChEBI" id="CHEBI:57742"/>
    </reaction>
</comment>
<comment type="activity regulation">
    <text evidence="1">Creatine uptake is inhibited by carbonyl cyanide 3-chlorophenylhydrazone (CCCP) and by valinomycin.</text>
</comment>
<comment type="biophysicochemical properties">
    <kinetics>
        <KM evidence="5">3.38 mM for guanidinoacetate</KM>
        <KM evidence="5">240 uM for creatinine</KM>
    </kinetics>
</comment>
<comment type="subunit">
    <text evidence="1">Interacts with isoform 2 of BSG; this interaction is required for its localization to the plasma membrane.</text>
</comment>
<comment type="subcellular location">
    <subcellularLocation>
        <location evidence="1">Cell membrane</location>
        <topology evidence="2">Multi-pass membrane protein</topology>
    </subcellularLocation>
    <subcellularLocation>
        <location evidence="6">Basolateral cell membrane</location>
        <topology evidence="2">Multi-pass membrane protein</topology>
    </subcellularLocation>
    <text evidence="1 6">Localized on the sinusoidal membrane of the hepatocyte. Colocalized with SLC6A13 in hepatocytes around the portal vein, (PubMed:34075817). Interaction with isoform 2 of BSG is required for its localization to the plasma membrane (By similarity).</text>
</comment>
<comment type="tissue specificity">
    <text evidence="4 6">Detected in kidney, choroid plexus, testis, lung, stomach, large and small intestine, spleen, fat and parotid gland (PubMed:21778275, PubMed:34075817). In eye, expressed in cornea, ciliary epithelium, lens epithelium and lens fiber (PubMed:21778275).</text>
</comment>
<comment type="disruption phenotype">
    <text evidence="4">Homozygous knockout rats are born to expected Mendelian ratios and no obvious ocular phenotype is observed.</text>
</comment>
<comment type="similarity">
    <text evidence="8">Belongs to the major facilitator superfamily. Monocarboxylate porter (TC 2.A.1.13) family.</text>
</comment>
<gene>
    <name evidence="9" type="primary">Slc16a12</name>
    <name evidence="7" type="synonym">Mct12</name>
</gene>
<protein>
    <recommendedName>
        <fullName evidence="8">Monocarboxylate transporter 12</fullName>
        <shortName evidence="8">MCT 12</shortName>
    </recommendedName>
    <alternativeName>
        <fullName evidence="9">Solute carrier family 16 member 12</fullName>
    </alternativeName>
</protein>
<name>MOT12_RAT</name>
<reference key="1">
    <citation type="journal article" date="2004" name="Nature">
        <title>Genome sequence of the Brown Norway rat yields insights into mammalian evolution.</title>
        <authorList>
            <person name="Gibbs R.A."/>
            <person name="Weinstock G.M."/>
            <person name="Metzker M.L."/>
            <person name="Muzny D.M."/>
            <person name="Sodergren E.J."/>
            <person name="Scherer S."/>
            <person name="Scott G."/>
            <person name="Steffen D."/>
            <person name="Worley K.C."/>
            <person name="Burch P.E."/>
            <person name="Okwuonu G."/>
            <person name="Hines S."/>
            <person name="Lewis L."/>
            <person name="Deramo C."/>
            <person name="Delgado O."/>
            <person name="Dugan-Rocha S."/>
            <person name="Miner G."/>
            <person name="Morgan M."/>
            <person name="Hawes A."/>
            <person name="Gill R."/>
            <person name="Holt R.A."/>
            <person name="Adams M.D."/>
            <person name="Amanatides P.G."/>
            <person name="Baden-Tillson H."/>
            <person name="Barnstead M."/>
            <person name="Chin S."/>
            <person name="Evans C.A."/>
            <person name="Ferriera S."/>
            <person name="Fosler C."/>
            <person name="Glodek A."/>
            <person name="Gu Z."/>
            <person name="Jennings D."/>
            <person name="Kraft C.L."/>
            <person name="Nguyen T."/>
            <person name="Pfannkoch C.M."/>
            <person name="Sitter C."/>
            <person name="Sutton G.G."/>
            <person name="Venter J.C."/>
            <person name="Woodage T."/>
            <person name="Smith D."/>
            <person name="Lee H.-M."/>
            <person name="Gustafson E."/>
            <person name="Cahill P."/>
            <person name="Kana A."/>
            <person name="Doucette-Stamm L."/>
            <person name="Weinstock K."/>
            <person name="Fechtel K."/>
            <person name="Weiss R.B."/>
            <person name="Dunn D.M."/>
            <person name="Green E.D."/>
            <person name="Blakesley R.W."/>
            <person name="Bouffard G.G."/>
            <person name="De Jong P.J."/>
            <person name="Osoegawa K."/>
            <person name="Zhu B."/>
            <person name="Marra M."/>
            <person name="Schein J."/>
            <person name="Bosdet I."/>
            <person name="Fjell C."/>
            <person name="Jones S."/>
            <person name="Krzywinski M."/>
            <person name="Mathewson C."/>
            <person name="Siddiqui A."/>
            <person name="Wye N."/>
            <person name="McPherson J."/>
            <person name="Zhao S."/>
            <person name="Fraser C.M."/>
            <person name="Shetty J."/>
            <person name="Shatsman S."/>
            <person name="Geer K."/>
            <person name="Chen Y."/>
            <person name="Abramzon S."/>
            <person name="Nierman W.C."/>
            <person name="Havlak P.H."/>
            <person name="Chen R."/>
            <person name="Durbin K.J."/>
            <person name="Egan A."/>
            <person name="Ren Y."/>
            <person name="Song X.-Z."/>
            <person name="Li B."/>
            <person name="Liu Y."/>
            <person name="Qin X."/>
            <person name="Cawley S."/>
            <person name="Cooney A.J."/>
            <person name="D'Souza L.M."/>
            <person name="Martin K."/>
            <person name="Wu J.Q."/>
            <person name="Gonzalez-Garay M.L."/>
            <person name="Jackson A.R."/>
            <person name="Kalafus K.J."/>
            <person name="McLeod M.P."/>
            <person name="Milosavljevic A."/>
            <person name="Virk D."/>
            <person name="Volkov A."/>
            <person name="Wheeler D.A."/>
            <person name="Zhang Z."/>
            <person name="Bailey J.A."/>
            <person name="Eichler E.E."/>
            <person name="Tuzun E."/>
            <person name="Birney E."/>
            <person name="Mongin E."/>
            <person name="Ureta-Vidal A."/>
            <person name="Woodwark C."/>
            <person name="Zdobnov E."/>
            <person name="Bork P."/>
            <person name="Suyama M."/>
            <person name="Torrents D."/>
            <person name="Alexandersson M."/>
            <person name="Trask B.J."/>
            <person name="Young J.M."/>
            <person name="Huang H."/>
            <person name="Wang H."/>
            <person name="Xing H."/>
            <person name="Daniels S."/>
            <person name="Gietzen D."/>
            <person name="Schmidt J."/>
            <person name="Stevens K."/>
            <person name="Vitt U."/>
            <person name="Wingrove J."/>
            <person name="Camara F."/>
            <person name="Mar Alba M."/>
            <person name="Abril J.F."/>
            <person name="Guigo R."/>
            <person name="Smit A."/>
            <person name="Dubchak I."/>
            <person name="Rubin E.M."/>
            <person name="Couronne O."/>
            <person name="Poliakov A."/>
            <person name="Huebner N."/>
            <person name="Ganten D."/>
            <person name="Goesele C."/>
            <person name="Hummel O."/>
            <person name="Kreitler T."/>
            <person name="Lee Y.-A."/>
            <person name="Monti J."/>
            <person name="Schulz H."/>
            <person name="Zimdahl H."/>
            <person name="Himmelbauer H."/>
            <person name="Lehrach H."/>
            <person name="Jacob H.J."/>
            <person name="Bromberg S."/>
            <person name="Gullings-Handley J."/>
            <person name="Jensen-Seaman M.I."/>
            <person name="Kwitek A.E."/>
            <person name="Lazar J."/>
            <person name="Pasko D."/>
            <person name="Tonellato P.J."/>
            <person name="Twigger S."/>
            <person name="Ponting C.P."/>
            <person name="Duarte J.M."/>
            <person name="Rice S."/>
            <person name="Goodstadt L."/>
            <person name="Beatson S.A."/>
            <person name="Emes R.D."/>
            <person name="Winter E.E."/>
            <person name="Webber C."/>
            <person name="Brandt P."/>
            <person name="Nyakatura G."/>
            <person name="Adetobi M."/>
            <person name="Chiaromonte F."/>
            <person name="Elnitski L."/>
            <person name="Eswara P."/>
            <person name="Hardison R.C."/>
            <person name="Hou M."/>
            <person name="Kolbe D."/>
            <person name="Makova K."/>
            <person name="Miller W."/>
            <person name="Nekrutenko A."/>
            <person name="Riemer C."/>
            <person name="Schwartz S."/>
            <person name="Taylor J."/>
            <person name="Yang S."/>
            <person name="Zhang Y."/>
            <person name="Lindpaintner K."/>
            <person name="Andrews T.D."/>
            <person name="Caccamo M."/>
            <person name="Clamp M."/>
            <person name="Clarke L."/>
            <person name="Curwen V."/>
            <person name="Durbin R.M."/>
            <person name="Eyras E."/>
            <person name="Searle S.M."/>
            <person name="Cooper G.M."/>
            <person name="Batzoglou S."/>
            <person name="Brudno M."/>
            <person name="Sidow A."/>
            <person name="Stone E.A."/>
            <person name="Payseur B.A."/>
            <person name="Bourque G."/>
            <person name="Lopez-Otin C."/>
            <person name="Puente X.S."/>
            <person name="Chakrabarti K."/>
            <person name="Chatterji S."/>
            <person name="Dewey C."/>
            <person name="Pachter L."/>
            <person name="Bray N."/>
            <person name="Yap V.B."/>
            <person name="Caspi A."/>
            <person name="Tesler G."/>
            <person name="Pevzner P.A."/>
            <person name="Haussler D."/>
            <person name="Roskin K.M."/>
            <person name="Baertsch R."/>
            <person name="Clawson H."/>
            <person name="Furey T.S."/>
            <person name="Hinrichs A.S."/>
            <person name="Karolchik D."/>
            <person name="Kent W.J."/>
            <person name="Rosenbloom K.R."/>
            <person name="Trumbower H."/>
            <person name="Weirauch M."/>
            <person name="Cooper D.N."/>
            <person name="Stenson P.D."/>
            <person name="Ma B."/>
            <person name="Brent M."/>
            <person name="Arumugam M."/>
            <person name="Shteynberg D."/>
            <person name="Copley R.R."/>
            <person name="Taylor M.S."/>
            <person name="Riethman H."/>
            <person name="Mudunuri U."/>
            <person name="Peterson J."/>
            <person name="Guyer M."/>
            <person name="Felsenfeld A."/>
            <person name="Old S."/>
            <person name="Mockrin S."/>
            <person name="Collins F.S."/>
        </authorList>
    </citation>
    <scope>NUCLEOTIDE SEQUENCE [LARGE SCALE GENOMIC DNA]</scope>
    <source>
        <strain>Brown Norway</strain>
    </source>
</reference>
<reference key="2">
    <citation type="journal article" date="2011" name="Invest. Ophthalmol. Vis. Sci.">
        <title>Juvenile cataract-associated mutation of solute carrier SLC16A12 impairs trafficking of the protein to the plasma membrane.</title>
        <authorList>
            <person name="Castorino J.J."/>
            <person name="Gallagher-Colombo S.M."/>
            <person name="Levin A.V."/>
            <person name="Fitzgerald P.G."/>
            <person name="Polishook J."/>
            <person name="Kloeckener-Gruissem B."/>
            <person name="Ostertag E."/>
            <person name="Philp N.J."/>
        </authorList>
    </citation>
    <scope>DISRUPTION PHENOTYPE</scope>
    <scope>TISSUE SPECIFICITY</scope>
</reference>
<reference key="3">
    <citation type="journal article" date="2020" name="Biochim. Biophys. Acta">
        <title>Monocarboxylate transporter 12 as a guanidinoacetate efflux transporter in renal proximal tubular epithelial cells.</title>
        <authorList>
            <person name="Jomura R."/>
            <person name="Tanno Y."/>
            <person name="Akanuma S.I."/>
            <person name="Kubo Y."/>
            <person name="Tachikawa M."/>
            <person name="Hosoya K.I."/>
        </authorList>
    </citation>
    <scope>FUNCTION</scope>
    <scope>TRANSPORTER ACTIVITY</scope>
    <scope>BIOPHYSICOCHEMICAL PROPERTIES</scope>
</reference>
<reference key="4">
    <citation type="journal article" date="2021" name="Am. J. Physiol.">
        <title>Contribution of monocarboxylate transporter 12 to blood supply of creatine on the sinusoidal membrane of the hepatocytes.</title>
        <authorList>
            <person name="Jomura R."/>
            <person name="Tanno Y."/>
            <person name="Akanuma S.I."/>
            <person name="Kubo Y."/>
            <person name="Tachikawa M."/>
            <person name="Hosoya K.I."/>
        </authorList>
    </citation>
    <scope>FUNCTION</scope>
    <scope>TRANSPORTER ACTIVITY</scope>
    <scope>SUBCELLULAR LOCATION</scope>
    <scope>TISSUE SPECIFICITY</scope>
</reference>
<accession>D4A734</accession>